<proteinExistence type="evidence at transcript level"/>
<feature type="chain" id="PRO_0000437649" description="Protein STPG3">
    <location>
        <begin position="1"/>
        <end position="306"/>
    </location>
</feature>
<feature type="region of interest" description="Disordered" evidence="1">
    <location>
        <begin position="210"/>
        <end position="230"/>
    </location>
</feature>
<organism evidence="2">
    <name type="scientific">Mus musculus</name>
    <name type="common">Mouse</name>
    <dbReference type="NCBI Taxonomy" id="10090"/>
    <lineage>
        <taxon>Eukaryota</taxon>
        <taxon>Metazoa</taxon>
        <taxon>Chordata</taxon>
        <taxon>Craniata</taxon>
        <taxon>Vertebrata</taxon>
        <taxon>Euteleostomi</taxon>
        <taxon>Mammalia</taxon>
        <taxon>Eutheria</taxon>
        <taxon>Euarchontoglires</taxon>
        <taxon>Glires</taxon>
        <taxon>Rodentia</taxon>
        <taxon>Myomorpha</taxon>
        <taxon>Muroidea</taxon>
        <taxon>Muridae</taxon>
        <taxon>Murinae</taxon>
        <taxon>Mus</taxon>
        <taxon>Mus</taxon>
    </lineage>
</organism>
<name>STPG3_MOUSE</name>
<accession>A2RSX4</accession>
<evidence type="ECO:0000256" key="1">
    <source>
        <dbReference type="SAM" id="MobiDB-lite"/>
    </source>
</evidence>
<evidence type="ECO:0000312" key="2">
    <source>
        <dbReference type="EMBL" id="AAI32287.1"/>
    </source>
</evidence>
<evidence type="ECO:0000312" key="3">
    <source>
        <dbReference type="MGI" id="MGI:1921722"/>
    </source>
</evidence>
<keyword id="KW-1185">Reference proteome</keyword>
<sequence length="306" mass="34690">MNFDQKAVKFLANFYINGGKHWTRGPLSQKPLHPTQPSAAAVLWWDQELETAWDEMWHPKMKRSSSGFRLRIGAPNESTPISTGTLRELWLERRPPILMDLDVPGPAQYEVPNMSLREASPHPQYTIGRKYPVREGGGRRAWQTMWLQSESPFMQKTDFNRETKWPSPAEYTPLSQPAFPAFSFGDRHRSVVKMPESRFRPGMLRARGPCSYTPLLPTSKPSGEKRPSPNTYNILPGYRLQSTRSPAFSMSRSPAFASWVSSSGTPGPAAYYVEDCYNSRFPSSPGVVIQGVRRPKRHDTGPFCTL</sequence>
<dbReference type="EMBL" id="AL732309">
    <property type="status" value="NOT_ANNOTATED_CDS"/>
    <property type="molecule type" value="Genomic_DNA"/>
</dbReference>
<dbReference type="EMBL" id="CH466542">
    <property type="protein sequence ID" value="EDL08210.1"/>
    <property type="molecule type" value="Genomic_DNA"/>
</dbReference>
<dbReference type="EMBL" id="BC132286">
    <property type="protein sequence ID" value="AAI32287.1"/>
    <property type="molecule type" value="mRNA"/>
</dbReference>
<dbReference type="EMBL" id="BC138006">
    <property type="protein sequence ID" value="AAI38007.1"/>
    <property type="molecule type" value="mRNA"/>
</dbReference>
<dbReference type="CCDS" id="CCDS50525.1"/>
<dbReference type="RefSeq" id="NP_001386368.1">
    <property type="nucleotide sequence ID" value="NM_001399439.1"/>
</dbReference>
<dbReference type="RefSeq" id="NP_083237.1">
    <property type="nucleotide sequence ID" value="NM_028961.2"/>
</dbReference>
<dbReference type="FunCoup" id="A2RSX4">
    <property type="interactions" value="25"/>
</dbReference>
<dbReference type="STRING" id="10090.ENSMUSP00000037603"/>
<dbReference type="GlyGen" id="A2RSX4">
    <property type="glycosylation" value="2 sites, 1 O-linked glycan (1 site)"/>
</dbReference>
<dbReference type="iPTMnet" id="A2RSX4"/>
<dbReference type="PhosphoSitePlus" id="A2RSX4"/>
<dbReference type="PaxDb" id="10090-ENSMUSP00000037603"/>
<dbReference type="ProteomicsDB" id="258646"/>
<dbReference type="Antibodypedia" id="48969">
    <property type="antibodies" value="45 antibodies from 9 providers"/>
</dbReference>
<dbReference type="Ensembl" id="ENSMUST00000043774.11">
    <property type="protein sequence ID" value="ENSMUSP00000037603.5"/>
    <property type="gene ID" value="ENSMUSG00000036770.12"/>
</dbReference>
<dbReference type="GeneID" id="74472"/>
<dbReference type="KEGG" id="mmu:74472"/>
<dbReference type="UCSC" id="uc008iqp.2">
    <property type="organism name" value="mouse"/>
</dbReference>
<dbReference type="AGR" id="MGI:1921722"/>
<dbReference type="CTD" id="441476"/>
<dbReference type="MGI" id="MGI:1921722">
    <property type="gene designation" value="Stpg3"/>
</dbReference>
<dbReference type="VEuPathDB" id="HostDB:ENSMUSG00000036770"/>
<dbReference type="eggNOG" id="ENOG502S213">
    <property type="taxonomic scope" value="Eukaryota"/>
</dbReference>
<dbReference type="GeneTree" id="ENSGT00390000009524"/>
<dbReference type="HOGENOM" id="CLU_986787_0_0_1"/>
<dbReference type="InParanoid" id="A2RSX4"/>
<dbReference type="OMA" id="ASWINYW"/>
<dbReference type="OrthoDB" id="406368at2759"/>
<dbReference type="PhylomeDB" id="A2RSX4"/>
<dbReference type="TreeFam" id="TF329447"/>
<dbReference type="BioGRID-ORCS" id="74472">
    <property type="hits" value="2 hits in 80 CRISPR screens"/>
</dbReference>
<dbReference type="PRO" id="PR:A2RSX4"/>
<dbReference type="Proteomes" id="UP000000589">
    <property type="component" value="Chromosome 2"/>
</dbReference>
<dbReference type="RNAct" id="A2RSX4">
    <property type="molecule type" value="protein"/>
</dbReference>
<dbReference type="Bgee" id="ENSMUSG00000036770">
    <property type="expression patterns" value="Expressed in spermatid and 13 other cell types or tissues"/>
</dbReference>
<dbReference type="ExpressionAtlas" id="A2RSX4">
    <property type="expression patterns" value="baseline and differential"/>
</dbReference>
<dbReference type="InterPro" id="IPR010736">
    <property type="entry name" value="SHIPPO-rpt"/>
</dbReference>
<dbReference type="Pfam" id="PF07004">
    <property type="entry name" value="SHIPPO-rpt"/>
    <property type="match status" value="3"/>
</dbReference>
<reference key="1">
    <citation type="journal article" date="2009" name="PLoS Biol.">
        <title>Lineage-specific biology revealed by a finished genome assembly of the mouse.</title>
        <authorList>
            <person name="Church D.M."/>
            <person name="Goodstadt L."/>
            <person name="Hillier L.W."/>
            <person name="Zody M.C."/>
            <person name="Goldstein S."/>
            <person name="She X."/>
            <person name="Bult C.J."/>
            <person name="Agarwala R."/>
            <person name="Cherry J.L."/>
            <person name="DiCuccio M."/>
            <person name="Hlavina W."/>
            <person name="Kapustin Y."/>
            <person name="Meric P."/>
            <person name="Maglott D."/>
            <person name="Birtle Z."/>
            <person name="Marques A.C."/>
            <person name="Graves T."/>
            <person name="Zhou S."/>
            <person name="Teague B."/>
            <person name="Potamousis K."/>
            <person name="Churas C."/>
            <person name="Place M."/>
            <person name="Herschleb J."/>
            <person name="Runnheim R."/>
            <person name="Forrest D."/>
            <person name="Amos-Landgraf J."/>
            <person name="Schwartz D.C."/>
            <person name="Cheng Z."/>
            <person name="Lindblad-Toh K."/>
            <person name="Eichler E.E."/>
            <person name="Ponting C.P."/>
        </authorList>
    </citation>
    <scope>NUCLEOTIDE SEQUENCE [LARGE SCALE GENOMIC DNA]</scope>
    <source>
        <strain>C57BL/6J</strain>
    </source>
</reference>
<reference key="2">
    <citation type="submission" date="2005-07" db="EMBL/GenBank/DDBJ databases">
        <authorList>
            <person name="Mural R.J."/>
            <person name="Adams M.D."/>
            <person name="Myers E.W."/>
            <person name="Smith H.O."/>
            <person name="Venter J.C."/>
        </authorList>
    </citation>
    <scope>NUCLEOTIDE SEQUENCE [LARGE SCALE GENOMIC DNA]</scope>
</reference>
<reference key="3">
    <citation type="journal article" date="2004" name="Genome Res.">
        <title>The status, quality, and expansion of the NIH full-length cDNA project: the Mammalian Gene Collection (MGC).</title>
        <authorList>
            <consortium name="The MGC Project Team"/>
        </authorList>
    </citation>
    <scope>NUCLEOTIDE SEQUENCE [LARGE SCALE MRNA]</scope>
    <source>
        <tissue>Brain</tissue>
    </source>
</reference>
<protein>
    <recommendedName>
        <fullName>Protein STPG3</fullName>
    </recommendedName>
    <alternativeName>
        <fullName>Sperm-tail PG-rich repeat-containing protein 3</fullName>
    </alternativeName>
</protein>
<gene>
    <name evidence="3" type="primary">Stpg3</name>
</gene>